<keyword id="KW-0240">DNA-directed RNA polymerase</keyword>
<keyword id="KW-0548">Nucleotidyltransferase</keyword>
<keyword id="KW-0804">Transcription</keyword>
<keyword id="KW-0808">Transferase</keyword>
<gene>
    <name evidence="1" type="primary">rpoB</name>
    <name type="ordered locus">Bcen_2767</name>
</gene>
<proteinExistence type="inferred from homology"/>
<feature type="chain" id="PRO_0000300289" description="DNA-directed RNA polymerase subunit beta">
    <location>
        <begin position="1"/>
        <end position="1368"/>
    </location>
</feature>
<evidence type="ECO:0000255" key="1">
    <source>
        <dbReference type="HAMAP-Rule" id="MF_01321"/>
    </source>
</evidence>
<comment type="function">
    <text evidence="1">DNA-dependent RNA polymerase catalyzes the transcription of DNA into RNA using the four ribonucleoside triphosphates as substrates.</text>
</comment>
<comment type="catalytic activity">
    <reaction evidence="1">
        <text>RNA(n) + a ribonucleoside 5'-triphosphate = RNA(n+1) + diphosphate</text>
        <dbReference type="Rhea" id="RHEA:21248"/>
        <dbReference type="Rhea" id="RHEA-COMP:14527"/>
        <dbReference type="Rhea" id="RHEA-COMP:17342"/>
        <dbReference type="ChEBI" id="CHEBI:33019"/>
        <dbReference type="ChEBI" id="CHEBI:61557"/>
        <dbReference type="ChEBI" id="CHEBI:140395"/>
        <dbReference type="EC" id="2.7.7.6"/>
    </reaction>
</comment>
<comment type="subunit">
    <text evidence="1">The RNAP catalytic core consists of 2 alpha, 1 beta, 1 beta' and 1 omega subunit. When a sigma factor is associated with the core the holoenzyme is formed, which can initiate transcription.</text>
</comment>
<comment type="similarity">
    <text evidence="1">Belongs to the RNA polymerase beta chain family.</text>
</comment>
<reference key="1">
    <citation type="submission" date="2006-05" db="EMBL/GenBank/DDBJ databases">
        <title>Complete sequence of chromosome 1 of Burkholderia cenocepacia AU 1054.</title>
        <authorList>
            <consortium name="US DOE Joint Genome Institute"/>
            <person name="Copeland A."/>
            <person name="Lucas S."/>
            <person name="Lapidus A."/>
            <person name="Barry K."/>
            <person name="Detter J.C."/>
            <person name="Glavina del Rio T."/>
            <person name="Hammon N."/>
            <person name="Israni S."/>
            <person name="Dalin E."/>
            <person name="Tice H."/>
            <person name="Pitluck S."/>
            <person name="Chain P."/>
            <person name="Malfatti S."/>
            <person name="Shin M."/>
            <person name="Vergez L."/>
            <person name="Schmutz J."/>
            <person name="Larimer F."/>
            <person name="Land M."/>
            <person name="Hauser L."/>
            <person name="Kyrpides N."/>
            <person name="Lykidis A."/>
            <person name="LiPuma J.J."/>
            <person name="Konstantinidis K."/>
            <person name="Tiedje J.M."/>
            <person name="Richardson P."/>
        </authorList>
    </citation>
    <scope>NUCLEOTIDE SEQUENCE [LARGE SCALE GENOMIC DNA]</scope>
    <source>
        <strain>AU 1054</strain>
    </source>
</reference>
<dbReference type="EC" id="2.7.7.6" evidence="1"/>
<dbReference type="EMBL" id="CP000378">
    <property type="protein sequence ID" value="ABF77665.1"/>
    <property type="molecule type" value="Genomic_DNA"/>
</dbReference>
<dbReference type="SMR" id="Q1BRU0"/>
<dbReference type="HOGENOM" id="CLU_000524_4_3_4"/>
<dbReference type="GO" id="GO:0000428">
    <property type="term" value="C:DNA-directed RNA polymerase complex"/>
    <property type="evidence" value="ECO:0007669"/>
    <property type="project" value="UniProtKB-KW"/>
</dbReference>
<dbReference type="GO" id="GO:0003677">
    <property type="term" value="F:DNA binding"/>
    <property type="evidence" value="ECO:0007669"/>
    <property type="project" value="UniProtKB-UniRule"/>
</dbReference>
<dbReference type="GO" id="GO:0003899">
    <property type="term" value="F:DNA-directed RNA polymerase activity"/>
    <property type="evidence" value="ECO:0007669"/>
    <property type="project" value="UniProtKB-UniRule"/>
</dbReference>
<dbReference type="GO" id="GO:0032549">
    <property type="term" value="F:ribonucleoside binding"/>
    <property type="evidence" value="ECO:0007669"/>
    <property type="project" value="InterPro"/>
</dbReference>
<dbReference type="GO" id="GO:0006351">
    <property type="term" value="P:DNA-templated transcription"/>
    <property type="evidence" value="ECO:0007669"/>
    <property type="project" value="UniProtKB-UniRule"/>
</dbReference>
<dbReference type="CDD" id="cd00653">
    <property type="entry name" value="RNA_pol_B_RPB2"/>
    <property type="match status" value="1"/>
</dbReference>
<dbReference type="FunFam" id="2.40.50.100:FF:000006">
    <property type="entry name" value="DNA-directed RNA polymerase subunit beta"/>
    <property type="match status" value="1"/>
</dbReference>
<dbReference type="FunFam" id="2.40.50.150:FF:000001">
    <property type="entry name" value="DNA-directed RNA polymerase subunit beta"/>
    <property type="match status" value="1"/>
</dbReference>
<dbReference type="FunFam" id="3.90.1800.10:FF:000001">
    <property type="entry name" value="DNA-directed RNA polymerase subunit beta"/>
    <property type="match status" value="1"/>
</dbReference>
<dbReference type="Gene3D" id="2.40.50.100">
    <property type="match status" value="1"/>
</dbReference>
<dbReference type="Gene3D" id="2.40.50.150">
    <property type="match status" value="1"/>
</dbReference>
<dbReference type="Gene3D" id="3.90.1100.10">
    <property type="match status" value="2"/>
</dbReference>
<dbReference type="Gene3D" id="2.30.150.10">
    <property type="entry name" value="DNA-directed RNA polymerase, beta subunit, external 1 domain"/>
    <property type="match status" value="1"/>
</dbReference>
<dbReference type="Gene3D" id="2.40.270.10">
    <property type="entry name" value="DNA-directed RNA polymerase, subunit 2, domain 6"/>
    <property type="match status" value="2"/>
</dbReference>
<dbReference type="Gene3D" id="3.90.1800.10">
    <property type="entry name" value="RNA polymerase alpha subunit dimerisation domain"/>
    <property type="match status" value="1"/>
</dbReference>
<dbReference type="Gene3D" id="3.90.1110.10">
    <property type="entry name" value="RNA polymerase Rpb2, domain 2"/>
    <property type="match status" value="2"/>
</dbReference>
<dbReference type="HAMAP" id="MF_01321">
    <property type="entry name" value="RNApol_bact_RpoB"/>
    <property type="match status" value="1"/>
</dbReference>
<dbReference type="InterPro" id="IPR042107">
    <property type="entry name" value="DNA-dir_RNA_pol_bsu_ext_1_sf"/>
</dbReference>
<dbReference type="InterPro" id="IPR019462">
    <property type="entry name" value="DNA-dir_RNA_pol_bsu_external_1"/>
</dbReference>
<dbReference type="InterPro" id="IPR015712">
    <property type="entry name" value="DNA-dir_RNA_pol_su2"/>
</dbReference>
<dbReference type="InterPro" id="IPR007120">
    <property type="entry name" value="DNA-dir_RNAP_su2_dom"/>
</dbReference>
<dbReference type="InterPro" id="IPR037033">
    <property type="entry name" value="DNA-dir_RNAP_su2_hyb_sf"/>
</dbReference>
<dbReference type="InterPro" id="IPR010243">
    <property type="entry name" value="RNA_pol_bsu_bac"/>
</dbReference>
<dbReference type="InterPro" id="IPR007121">
    <property type="entry name" value="RNA_pol_bsu_CS"/>
</dbReference>
<dbReference type="InterPro" id="IPR007644">
    <property type="entry name" value="RNA_pol_bsu_protrusion"/>
</dbReference>
<dbReference type="InterPro" id="IPR007642">
    <property type="entry name" value="RNA_pol_Rpb2_2"/>
</dbReference>
<dbReference type="InterPro" id="IPR037034">
    <property type="entry name" value="RNA_pol_Rpb2_2_sf"/>
</dbReference>
<dbReference type="InterPro" id="IPR007645">
    <property type="entry name" value="RNA_pol_Rpb2_3"/>
</dbReference>
<dbReference type="InterPro" id="IPR007641">
    <property type="entry name" value="RNA_pol_Rpb2_7"/>
</dbReference>
<dbReference type="InterPro" id="IPR014724">
    <property type="entry name" value="RNA_pol_RPB2_OB-fold"/>
</dbReference>
<dbReference type="NCBIfam" id="NF001616">
    <property type="entry name" value="PRK00405.1"/>
    <property type="match status" value="1"/>
</dbReference>
<dbReference type="NCBIfam" id="TIGR02013">
    <property type="entry name" value="rpoB"/>
    <property type="match status" value="1"/>
</dbReference>
<dbReference type="PANTHER" id="PTHR20856">
    <property type="entry name" value="DNA-DIRECTED RNA POLYMERASE I SUBUNIT 2"/>
    <property type="match status" value="1"/>
</dbReference>
<dbReference type="Pfam" id="PF04563">
    <property type="entry name" value="RNA_pol_Rpb2_1"/>
    <property type="match status" value="1"/>
</dbReference>
<dbReference type="Pfam" id="PF04561">
    <property type="entry name" value="RNA_pol_Rpb2_2"/>
    <property type="match status" value="2"/>
</dbReference>
<dbReference type="Pfam" id="PF04565">
    <property type="entry name" value="RNA_pol_Rpb2_3"/>
    <property type="match status" value="1"/>
</dbReference>
<dbReference type="Pfam" id="PF10385">
    <property type="entry name" value="RNA_pol_Rpb2_45"/>
    <property type="match status" value="1"/>
</dbReference>
<dbReference type="Pfam" id="PF00562">
    <property type="entry name" value="RNA_pol_Rpb2_6"/>
    <property type="match status" value="1"/>
</dbReference>
<dbReference type="Pfam" id="PF04560">
    <property type="entry name" value="RNA_pol_Rpb2_7"/>
    <property type="match status" value="1"/>
</dbReference>
<dbReference type="SUPFAM" id="SSF64484">
    <property type="entry name" value="beta and beta-prime subunits of DNA dependent RNA-polymerase"/>
    <property type="match status" value="1"/>
</dbReference>
<dbReference type="PROSITE" id="PS01166">
    <property type="entry name" value="RNA_POL_BETA"/>
    <property type="match status" value="1"/>
</dbReference>
<organism>
    <name type="scientific">Burkholderia orbicola (strain AU 1054)</name>
    <dbReference type="NCBI Taxonomy" id="331271"/>
    <lineage>
        <taxon>Bacteria</taxon>
        <taxon>Pseudomonadati</taxon>
        <taxon>Pseudomonadota</taxon>
        <taxon>Betaproteobacteria</taxon>
        <taxon>Burkholderiales</taxon>
        <taxon>Burkholderiaceae</taxon>
        <taxon>Burkholderia</taxon>
        <taxon>Burkholderia cepacia complex</taxon>
        <taxon>Burkholderia orbicola</taxon>
    </lineage>
</organism>
<sequence length="1368" mass="153280">MQYSFTEKKRIRKSFAKRPIVHQVPFLLATQLESFSTFLQADVPATQRKPEGLQAAFTSVFPIVSHNGFARLEFVSYALSSPAFNIKECQQRGLTYCSALRAKVRLVILDKESPNKPVVKEVKEQEVYMGEIPLMTPTGSFVINGTERVIVSQLHRSPGVFFEHDKGKTHSSGKLLFSARIIPYRGSWLDFEFDPKDILYFRVDRRRKMPVTILLKAIGLTPEQILANFFVFDNFTLMDEGAQLEFVPERLRGEVARFDITDRDGKVIVQKDKRINAKHIRDLEAAKTKFISVPEDYLLGRVLAKNVVDGDTGEVIASANDEVTESVLEKLREAGIKDIQTLYTNDLDQGPYISSTLRVDETTDKTAARIAIYRMMRPGEPPTEEAVEALFNRLFYSEEAYDLSKVGRMKFNRRVGRDEIVGPMTLQDDDILATIKILVELRNGKGEVDDIDHLGNRRVRCVGELAENQFRAGLVRVERAVKERLGQAESENLMPHDLINSKPISSAIREFFGSSQLSQFMDQTNPLSEITHKRRVSALGPGGLTRERAGFEVRDVHPTHYGRVCPIETPEGPNIGLINSLALYAHLNEYGFLETPYRKVVDSKVTDQIDYLSAIEEGRYMIAQANAAIDENGQLIDELVSSREAGETMMVTPDRIQYMDVAPSQIVSVAASLIPFLEHDDANRALMGSNMQRQAVPCLRPEKPVVGTGIERTCAVDSGTTVQAFRGGVVDYVDAGRIVIRVNDDEAVAGEVGVDIYNLIKYTRSNQNTNINQRPIVKMGDKVSRGDVLADGASTDLGELALGQNMLIAFMPWNGYNFEDSILISEKVVADDRYTSIHIEELNVVARDTKLGPEEITRDISNLAEVQLGRLDESGIVYIGAEVEAGDVLVGKVTPKGETQLTPEEKLLRAIFGEKASDVKDTSLRVPSGMSGTVIDVQVFTREGIQRDKRAQQIIDDELKRYRLDLNDQLRIVEGDAFQRLARMLVGKVANGGPKKLAKGTKIDQAYLEDLDHYHWFDIRLADDEAAAQLEAIKNSIEEKRHQFDLAFEEKRKKLTQGDELPPGVLKMVKVYLAVKRRLQPGDKMAGRHGNKGVVSKIVPIEDMPYMADGRPADVVLNPLGVPSRMNVGQVLEVHLGWAAKGLGWRIGEMLQRQAKIEELRTFLTKIYNESGRQEDLESFTDDEILELAKNLREGVPFATPVFDGATEEEMGKMLDLAFPDDIAEQLGMNPSKNQVRLYDGRTGEMFERRVTLGYMHYLKLHHLVDDKMHARSTGPYSLVTQQPLGGKAQFGGQRFGEMEVWALEAYGASYVLQEMLTVKSDDVTGRTKVYENLVKGDHVIDAGMPESFNVLVKEIRSLGIDIDLDRN</sequence>
<protein>
    <recommendedName>
        <fullName evidence="1">DNA-directed RNA polymerase subunit beta</fullName>
        <shortName evidence="1">RNAP subunit beta</shortName>
        <ecNumber evidence="1">2.7.7.6</ecNumber>
    </recommendedName>
    <alternativeName>
        <fullName evidence="1">RNA polymerase subunit beta</fullName>
    </alternativeName>
    <alternativeName>
        <fullName evidence="1">Transcriptase subunit beta</fullName>
    </alternativeName>
</protein>
<accession>Q1BRU0</accession>
<name>RPOB_BURO1</name>